<reference key="1">
    <citation type="journal article" date="2009" name="Genome Res.">
        <title>Comparative genomics of the fungal pathogens Candida dubliniensis and Candida albicans.</title>
        <authorList>
            <person name="Jackson A.P."/>
            <person name="Gamble J.A."/>
            <person name="Yeomans T."/>
            <person name="Moran G.P."/>
            <person name="Saunders D."/>
            <person name="Harris D."/>
            <person name="Aslett M."/>
            <person name="Barrell J.F."/>
            <person name="Butler G."/>
            <person name="Citiulo F."/>
            <person name="Coleman D.C."/>
            <person name="de Groot P.W.J."/>
            <person name="Goodwin T.J."/>
            <person name="Quail M.A."/>
            <person name="McQuillan J."/>
            <person name="Munro C.A."/>
            <person name="Pain A."/>
            <person name="Poulter R.T."/>
            <person name="Rajandream M.A."/>
            <person name="Renauld H."/>
            <person name="Spiering M.J."/>
            <person name="Tivey A."/>
            <person name="Gow N.A.R."/>
            <person name="Barrell B."/>
            <person name="Sullivan D.J."/>
            <person name="Berriman M."/>
        </authorList>
    </citation>
    <scope>NUCLEOTIDE SEQUENCE [LARGE SCALE GENOMIC DNA]</scope>
    <source>
        <strain>CD36 / ATCC MYA-646 / CBS 7987 / NCPF 3949 / NRRL Y-17841</strain>
    </source>
</reference>
<dbReference type="EC" id="4.1.1.130" evidence="1"/>
<dbReference type="EMBL" id="FM992688">
    <property type="protein sequence ID" value="CAX44556.1"/>
    <property type="molecule type" value="Genomic_DNA"/>
</dbReference>
<dbReference type="RefSeq" id="XP_002416968.1">
    <property type="nucleotide sequence ID" value="XM_002416923.1"/>
</dbReference>
<dbReference type="SMR" id="B9W797"/>
<dbReference type="GeneID" id="8044504"/>
<dbReference type="KEGG" id="cdu:CD36_02960"/>
<dbReference type="CGD" id="CAL0000164064">
    <property type="gene designation" value="Cd36_02960"/>
</dbReference>
<dbReference type="VEuPathDB" id="FungiDB:CD36_02960"/>
<dbReference type="eggNOG" id="KOG3244">
    <property type="taxonomic scope" value="Eukaryota"/>
</dbReference>
<dbReference type="HOGENOM" id="CLU_061241_0_2_1"/>
<dbReference type="OrthoDB" id="4249at2759"/>
<dbReference type="UniPathway" id="UPA00232"/>
<dbReference type="Proteomes" id="UP000002605">
    <property type="component" value="Chromosome 1"/>
</dbReference>
<dbReference type="GO" id="GO:0031314">
    <property type="term" value="C:extrinsic component of mitochondrial inner membrane"/>
    <property type="evidence" value="ECO:0007669"/>
    <property type="project" value="UniProtKB-UniRule"/>
</dbReference>
<dbReference type="GO" id="GO:0006744">
    <property type="term" value="P:ubiquinone biosynthetic process"/>
    <property type="evidence" value="ECO:0007669"/>
    <property type="project" value="UniProtKB-UniRule"/>
</dbReference>
<dbReference type="HAMAP" id="MF_03111">
    <property type="entry name" value="Coq4"/>
    <property type="match status" value="1"/>
</dbReference>
<dbReference type="InterPro" id="IPR007715">
    <property type="entry name" value="Coq4"/>
</dbReference>
<dbReference type="InterPro" id="IPR027540">
    <property type="entry name" value="Coq4_euk"/>
</dbReference>
<dbReference type="PANTHER" id="PTHR12922">
    <property type="entry name" value="UBIQUINONE BIOSYNTHESIS PROTEIN"/>
    <property type="match status" value="1"/>
</dbReference>
<dbReference type="PANTHER" id="PTHR12922:SF7">
    <property type="entry name" value="UBIQUINONE BIOSYNTHESIS PROTEIN COQ4 HOMOLOG, MITOCHONDRIAL"/>
    <property type="match status" value="1"/>
</dbReference>
<dbReference type="Pfam" id="PF05019">
    <property type="entry name" value="Coq4"/>
    <property type="match status" value="1"/>
</dbReference>
<organism>
    <name type="scientific">Candida dubliniensis (strain CD36 / ATCC MYA-646 / CBS 7987 / NCPF 3949 / NRRL Y-17841)</name>
    <name type="common">Yeast</name>
    <dbReference type="NCBI Taxonomy" id="573826"/>
    <lineage>
        <taxon>Eukaryota</taxon>
        <taxon>Fungi</taxon>
        <taxon>Dikarya</taxon>
        <taxon>Ascomycota</taxon>
        <taxon>Saccharomycotina</taxon>
        <taxon>Pichiomycetes</taxon>
        <taxon>Debaryomycetaceae</taxon>
        <taxon>Candida/Lodderomyces clade</taxon>
        <taxon>Candida</taxon>
    </lineage>
</organism>
<comment type="function">
    <text evidence="1">Lyase that catalyzes the C1-decarboxylation of 4-hydroxy-3-methoxy-5-(all-trans-polyprenyl)benzoic acid into 2-methoxy-6-(all-trans-polyprenyl)phenol during ubiquinone biosynthesis.</text>
</comment>
<comment type="catalytic activity">
    <reaction evidence="1">
        <text>a 4-hydroxy-3-methoxy-5-(all-trans-polyprenyl)benzoate + H(+) = a 2-methoxy-6-(all-trans-polyprenyl)phenol + CO2</text>
        <dbReference type="Rhea" id="RHEA:81179"/>
        <dbReference type="Rhea" id="RHEA-COMP:9551"/>
        <dbReference type="Rhea" id="RHEA-COMP:10931"/>
        <dbReference type="ChEBI" id="CHEBI:15378"/>
        <dbReference type="ChEBI" id="CHEBI:16526"/>
        <dbReference type="ChEBI" id="CHEBI:62731"/>
        <dbReference type="ChEBI" id="CHEBI:84443"/>
        <dbReference type="EC" id="4.1.1.130"/>
    </reaction>
</comment>
<comment type="cofactor">
    <cofactor evidence="1">
        <name>Zn(2+)</name>
        <dbReference type="ChEBI" id="CHEBI:29105"/>
    </cofactor>
</comment>
<comment type="pathway">
    <text evidence="1">Cofactor biosynthesis; ubiquinone biosynthesis.</text>
</comment>
<comment type="subunit">
    <text evidence="1">Component of a multi-subunit COQ enzyme complex, composed of at least COQ3, COQ4, COQ5, COQ6, COQ7 and COQ9.</text>
</comment>
<comment type="subcellular location">
    <subcellularLocation>
        <location evidence="1">Mitochondrion inner membrane</location>
        <topology evidence="1">Peripheral membrane protein</topology>
        <orientation evidence="1">Matrix side</orientation>
    </subcellularLocation>
</comment>
<comment type="similarity">
    <text evidence="1">Belongs to the COQ4 family.</text>
</comment>
<name>COQ4_CANDC</name>
<feature type="transit peptide" description="Mitochondrion" evidence="1">
    <location>
        <begin position="1"/>
        <end position="29"/>
    </location>
</feature>
<feature type="chain" id="PRO_0000388104" description="Ubiquinone biosynthesis protein COQ4, mitochondrial">
    <location>
        <begin position="30"/>
        <end position="323"/>
    </location>
</feature>
<feature type="binding site" evidence="1">
    <location>
        <position position="205"/>
    </location>
    <ligand>
        <name>Zn(2+)</name>
        <dbReference type="ChEBI" id="CHEBI:29105"/>
    </ligand>
</feature>
<feature type="binding site" evidence="1">
    <location>
        <position position="206"/>
    </location>
    <ligand>
        <name>Zn(2+)</name>
        <dbReference type="ChEBI" id="CHEBI:29105"/>
    </ligand>
</feature>
<feature type="binding site" evidence="1">
    <location>
        <position position="209"/>
    </location>
    <ligand>
        <name>Zn(2+)</name>
        <dbReference type="ChEBI" id="CHEBI:29105"/>
    </ligand>
</feature>
<feature type="binding site" evidence="1">
    <location>
        <position position="221"/>
    </location>
    <ligand>
        <name>Zn(2+)</name>
        <dbReference type="ChEBI" id="CHEBI:29105"/>
    </ligand>
</feature>
<keyword id="KW-0456">Lyase</keyword>
<keyword id="KW-0472">Membrane</keyword>
<keyword id="KW-0479">Metal-binding</keyword>
<keyword id="KW-0496">Mitochondrion</keyword>
<keyword id="KW-0999">Mitochondrion inner membrane</keyword>
<keyword id="KW-0809">Transit peptide</keyword>
<keyword id="KW-0831">Ubiquinone biosynthesis</keyword>
<keyword id="KW-0862">Zinc</keyword>
<proteinExistence type="inferred from homology"/>
<accession>B9W797</accession>
<evidence type="ECO:0000255" key="1">
    <source>
        <dbReference type="HAMAP-Rule" id="MF_03111"/>
    </source>
</evidence>
<gene>
    <name evidence="1" type="primary">COQ4</name>
    <name type="ORF">CD36_02960</name>
</gene>
<protein>
    <recommendedName>
        <fullName evidence="1">Ubiquinone biosynthesis protein COQ4, mitochondrial</fullName>
    </recommendedName>
    <alternativeName>
        <fullName>4-hydroxy-3-methoxy-5-polyprenylbenzoate decarboxylase</fullName>
        <ecNumber evidence="1">4.1.1.130</ecNumber>
    </alternativeName>
    <alternativeName>
        <fullName evidence="1">Coenzyme Q biosynthesis protein 4</fullName>
    </alternativeName>
</protein>
<sequence>MLKSTVSNTRIKCCRIDQRRNYLFTALASSALGSFLWSKNNVLASKMENGELHYHDPNLTFNKKLFNGKPPFERRAPDYPGHVPLYNFEKVLMFLGSSMGAFFHPEENKYIVALGESTAITPILQHLRHKMLSDPVGRTILREKPRMTSDSLNLTYLRSLPDNTIGKNYVNWLDKENVSPDTRVPVRYIDNEELAYIYQRYRECHDFYHAITGLPIIIEGEIAVKVFEFANIGIPMSGLGALFAPLRLKPSQRQRLREIYYPWAIKNGLFSKPLINVYWEKILEKDVNEFRQEMGIQQPPDLRNMRKEYFAKKKLEKQLQGRK</sequence>